<gene>
    <name type="primary">CHS-DII</name>
</gene>
<evidence type="ECO:0000255" key="1">
    <source>
        <dbReference type="PROSITE-ProRule" id="PRU10023"/>
    </source>
</evidence>
<evidence type="ECO:0000305" key="2"/>
<proteinExistence type="evidence at transcript level"/>
<organism>
    <name type="scientific">Ipomoea batatas</name>
    <name type="common">Sweet potato</name>
    <name type="synonym">Convolvulus batatas</name>
    <dbReference type="NCBI Taxonomy" id="4120"/>
    <lineage>
        <taxon>Eukaryota</taxon>
        <taxon>Viridiplantae</taxon>
        <taxon>Streptophyta</taxon>
        <taxon>Embryophyta</taxon>
        <taxon>Tracheophyta</taxon>
        <taxon>Spermatophyta</taxon>
        <taxon>Magnoliopsida</taxon>
        <taxon>eudicotyledons</taxon>
        <taxon>Gunneridae</taxon>
        <taxon>Pentapetalae</taxon>
        <taxon>asterids</taxon>
        <taxon>lamiids</taxon>
        <taxon>Solanales</taxon>
        <taxon>Convolvulaceae</taxon>
        <taxon>Ipomoeeae</taxon>
        <taxon>Ipomoea</taxon>
    </lineage>
</organism>
<sequence>MVTVEEVRKAQRAEGPATILAIGTATPANCVNQSTYPDYYFRITNSEHKTELKEKFQRMCDKSMITKRYMHLTEEILKENPSFCEYMAPSLDARQDIAVVEVPKLGKEAAQSAIKEWGQPKSKITHVVFCTTSGVDMPGADYQLTKLLGLRPSVKRLMMYQQGCFAGGTVLRLAKDLAENNKGARVLIVCSEITVVTFRGPSETHLDSLVGQALFGDGAAAVIVGADPTPAEKPLFQLVSAAQTLAPNSCGAIDGHLREVGLTFHLLKDVPSVVSNNIEKCLFEAFNPLGISDWNSVFWIAHPGGPAILDQVEDKLGLKPEKLRATRHVLSEYGNMSSACVLFILDEMRKASSNAGLGTTGEGLEWGVLFGFGPGLTIETVVLHSVLIKPGPH</sequence>
<comment type="function">
    <text>The primary product of this enzyme is 4,2',4',6'-tetrahydroxychalcone (also termed naringenin-chalcone or chalcone) which can under specific conditions spontaneously isomerize into naringenin.</text>
</comment>
<comment type="catalytic activity">
    <reaction evidence="1">
        <text>(E)-4-coumaroyl-CoA + 3 malonyl-CoA + 3 H(+) = 2',4,4',6'-tetrahydroxychalcone + 3 CO2 + 4 CoA</text>
        <dbReference type="Rhea" id="RHEA:11128"/>
        <dbReference type="ChEBI" id="CHEBI:15378"/>
        <dbReference type="ChEBI" id="CHEBI:15413"/>
        <dbReference type="ChEBI" id="CHEBI:16526"/>
        <dbReference type="ChEBI" id="CHEBI:57287"/>
        <dbReference type="ChEBI" id="CHEBI:57384"/>
        <dbReference type="ChEBI" id="CHEBI:85008"/>
        <dbReference type="EC" id="2.3.1.74"/>
    </reaction>
</comment>
<comment type="pathway">
    <text>Secondary metabolite biosynthesis; flavonoid biosynthesis.</text>
</comment>
<comment type="similarity">
    <text evidence="2">Belongs to the thiolase-like superfamily. Chalcone/stilbene synthases family.</text>
</comment>
<name>CHS6_IPOBA</name>
<protein>
    <recommendedName>
        <fullName>Chalcone synthase DII</fullName>
        <ecNumber>2.3.1.74</ecNumber>
    </recommendedName>
    <alternativeName>
        <fullName>Naringenin-chalcone synthase DII</fullName>
    </alternativeName>
</protein>
<accession>Q9MB38</accession>
<reference key="1">
    <citation type="submission" date="2000-01" db="EMBL/GenBank/DDBJ databases">
        <authorList>
            <person name="Hsu T.-J."/>
            <person name="Morita H."/>
            <person name="Shiokawa K."/>
            <person name="Noguchi H."/>
        </authorList>
    </citation>
    <scope>NUCLEOTIDE SEQUENCE [MRNA]</scope>
</reference>
<feature type="chain" id="PRO_0000215987" description="Chalcone synthase DII">
    <location>
        <begin position="1"/>
        <end position="393"/>
    </location>
</feature>
<feature type="active site" evidence="1">
    <location>
        <position position="164"/>
    </location>
</feature>
<dbReference type="EC" id="2.3.1.74"/>
<dbReference type="EMBL" id="AB037391">
    <property type="protein sequence ID" value="BAA90330.1"/>
    <property type="molecule type" value="mRNA"/>
</dbReference>
<dbReference type="SMR" id="Q9MB38"/>
<dbReference type="UniPathway" id="UPA00154"/>
<dbReference type="GO" id="GO:0016210">
    <property type="term" value="F:naringenin-chalcone synthase activity"/>
    <property type="evidence" value="ECO:0007669"/>
    <property type="project" value="UniProtKB-EC"/>
</dbReference>
<dbReference type="GO" id="GO:0009813">
    <property type="term" value="P:flavonoid biosynthetic process"/>
    <property type="evidence" value="ECO:0007669"/>
    <property type="project" value="UniProtKB-UniPathway"/>
</dbReference>
<dbReference type="GO" id="GO:0030639">
    <property type="term" value="P:polyketide biosynthetic process"/>
    <property type="evidence" value="ECO:0007669"/>
    <property type="project" value="TreeGrafter"/>
</dbReference>
<dbReference type="CDD" id="cd00831">
    <property type="entry name" value="CHS_like"/>
    <property type="match status" value="1"/>
</dbReference>
<dbReference type="FunFam" id="3.40.47.10:FF:000014">
    <property type="entry name" value="Chalcone synthase 1"/>
    <property type="match status" value="1"/>
</dbReference>
<dbReference type="FunFam" id="3.40.47.10:FF:000025">
    <property type="entry name" value="Chalcone synthase 2"/>
    <property type="match status" value="1"/>
</dbReference>
<dbReference type="Gene3D" id="3.40.47.10">
    <property type="match status" value="2"/>
</dbReference>
<dbReference type="InterPro" id="IPR012328">
    <property type="entry name" value="Chalcone/stilbene_synt_C"/>
</dbReference>
<dbReference type="InterPro" id="IPR001099">
    <property type="entry name" value="Chalcone/stilbene_synt_N"/>
</dbReference>
<dbReference type="InterPro" id="IPR018088">
    <property type="entry name" value="Chalcone/stilbene_synthase_AS"/>
</dbReference>
<dbReference type="InterPro" id="IPR011141">
    <property type="entry name" value="Polyketide_synthase_type-III"/>
</dbReference>
<dbReference type="InterPro" id="IPR016039">
    <property type="entry name" value="Thiolase-like"/>
</dbReference>
<dbReference type="PANTHER" id="PTHR11877:SF80">
    <property type="entry name" value="CHALCONE SYNTHASE 1"/>
    <property type="match status" value="1"/>
</dbReference>
<dbReference type="PANTHER" id="PTHR11877">
    <property type="entry name" value="HYDROXYMETHYLGLUTARYL-COA SYNTHASE"/>
    <property type="match status" value="1"/>
</dbReference>
<dbReference type="Pfam" id="PF02797">
    <property type="entry name" value="Chal_sti_synt_C"/>
    <property type="match status" value="1"/>
</dbReference>
<dbReference type="Pfam" id="PF00195">
    <property type="entry name" value="Chal_sti_synt_N"/>
    <property type="match status" value="1"/>
</dbReference>
<dbReference type="PIRSF" id="PIRSF000451">
    <property type="entry name" value="PKS_III"/>
    <property type="match status" value="1"/>
</dbReference>
<dbReference type="SUPFAM" id="SSF53901">
    <property type="entry name" value="Thiolase-like"/>
    <property type="match status" value="2"/>
</dbReference>
<dbReference type="PROSITE" id="PS00441">
    <property type="entry name" value="CHALCONE_SYNTH"/>
    <property type="match status" value="1"/>
</dbReference>
<keyword id="KW-0012">Acyltransferase</keyword>
<keyword id="KW-0284">Flavonoid biosynthesis</keyword>
<keyword id="KW-0808">Transferase</keyword>